<accession>Q2TBI5</accession>
<protein>
    <recommendedName>
        <fullName>Calcineurin subunit B type 2</fullName>
    </recommendedName>
    <alternativeName>
        <fullName>Protein phosphatase 2B regulatory subunit 2</fullName>
    </alternativeName>
    <alternativeName>
        <fullName>Protein phosphatase 3 regulatory subunit B beta isoform</fullName>
    </alternativeName>
</protein>
<dbReference type="EMBL" id="BC110140">
    <property type="protein sequence ID" value="AAI10141.1"/>
    <property type="molecule type" value="mRNA"/>
</dbReference>
<dbReference type="RefSeq" id="NP_001073099.1">
    <property type="nucleotide sequence ID" value="NM_001079631.2"/>
</dbReference>
<dbReference type="SMR" id="Q2TBI5"/>
<dbReference type="FunCoup" id="Q2TBI5">
    <property type="interactions" value="1429"/>
</dbReference>
<dbReference type="GeneID" id="617585"/>
<dbReference type="KEGG" id="bta:617585"/>
<dbReference type="CTD" id="5535"/>
<dbReference type="InParanoid" id="Q2TBI5"/>
<dbReference type="OrthoDB" id="191686at2759"/>
<dbReference type="Proteomes" id="UP000009136">
    <property type="component" value="Unplaced"/>
</dbReference>
<dbReference type="GO" id="GO:0005955">
    <property type="term" value="C:calcineurin complex"/>
    <property type="evidence" value="ECO:0000318"/>
    <property type="project" value="GO_Central"/>
</dbReference>
<dbReference type="GO" id="GO:0005739">
    <property type="term" value="C:mitochondrion"/>
    <property type="evidence" value="ECO:0007669"/>
    <property type="project" value="UniProtKB-SubCell"/>
</dbReference>
<dbReference type="GO" id="GO:0005509">
    <property type="term" value="F:calcium ion binding"/>
    <property type="evidence" value="ECO:0007669"/>
    <property type="project" value="InterPro"/>
</dbReference>
<dbReference type="GO" id="GO:0008597">
    <property type="term" value="F:calcium-dependent protein serine/threonine phosphatase regulator activity"/>
    <property type="evidence" value="ECO:0000318"/>
    <property type="project" value="GO_Central"/>
</dbReference>
<dbReference type="GO" id="GO:0019902">
    <property type="term" value="F:phosphatase binding"/>
    <property type="evidence" value="ECO:0000318"/>
    <property type="project" value="GO_Central"/>
</dbReference>
<dbReference type="GO" id="GO:0097720">
    <property type="term" value="P:calcineurin-mediated signaling"/>
    <property type="evidence" value="ECO:0000318"/>
    <property type="project" value="GO_Central"/>
</dbReference>
<dbReference type="CDD" id="cd00051">
    <property type="entry name" value="EFh"/>
    <property type="match status" value="1"/>
</dbReference>
<dbReference type="FunFam" id="1.10.238.10:FF:000047">
    <property type="entry name" value="Calcineurin subunit B type 1"/>
    <property type="match status" value="1"/>
</dbReference>
<dbReference type="Gene3D" id="1.10.238.10">
    <property type="entry name" value="EF-hand"/>
    <property type="match status" value="1"/>
</dbReference>
<dbReference type="InterPro" id="IPR011992">
    <property type="entry name" value="EF-hand-dom_pair"/>
</dbReference>
<dbReference type="InterPro" id="IPR018247">
    <property type="entry name" value="EF_Hand_1_Ca_BS"/>
</dbReference>
<dbReference type="InterPro" id="IPR002048">
    <property type="entry name" value="EF_hand_dom"/>
</dbReference>
<dbReference type="PANTHER" id="PTHR45942">
    <property type="entry name" value="PROTEIN PHOSPATASE 3 REGULATORY SUBUNIT B ALPHA ISOFORM TYPE 1"/>
    <property type="match status" value="1"/>
</dbReference>
<dbReference type="Pfam" id="PF13499">
    <property type="entry name" value="EF-hand_7"/>
    <property type="match status" value="2"/>
</dbReference>
<dbReference type="PRINTS" id="PR00450">
    <property type="entry name" value="RECOVERIN"/>
</dbReference>
<dbReference type="SMART" id="SM00054">
    <property type="entry name" value="EFh"/>
    <property type="match status" value="4"/>
</dbReference>
<dbReference type="SUPFAM" id="SSF47473">
    <property type="entry name" value="EF-hand"/>
    <property type="match status" value="1"/>
</dbReference>
<dbReference type="PROSITE" id="PS00018">
    <property type="entry name" value="EF_HAND_1"/>
    <property type="match status" value="3"/>
</dbReference>
<dbReference type="PROSITE" id="PS50222">
    <property type="entry name" value="EF_HAND_2"/>
    <property type="match status" value="4"/>
</dbReference>
<name>CANB2_BOVIN</name>
<gene>
    <name type="primary">PPP3R2</name>
</gene>
<sequence length="170" mass="19548">MGNEASYPAEICSHFDEDEIKRLRKRFKKLDLDSSSALSVKEFTSMPELQENPLVQRVIDVFDTDGDGQVDFREFILGTSQFSVRGDEEQKLRFAFSIYDMDKDGYISNGELFQVLKMMVGDNLKDWQLQQLVDKTIILLDKDGDGKISFQEFSAVVRSLEIHKHLVTIV</sequence>
<organism>
    <name type="scientific">Bos taurus</name>
    <name type="common">Bovine</name>
    <dbReference type="NCBI Taxonomy" id="9913"/>
    <lineage>
        <taxon>Eukaryota</taxon>
        <taxon>Metazoa</taxon>
        <taxon>Chordata</taxon>
        <taxon>Craniata</taxon>
        <taxon>Vertebrata</taxon>
        <taxon>Euteleostomi</taxon>
        <taxon>Mammalia</taxon>
        <taxon>Eutheria</taxon>
        <taxon>Laurasiatheria</taxon>
        <taxon>Artiodactyla</taxon>
        <taxon>Ruminantia</taxon>
        <taxon>Pecora</taxon>
        <taxon>Bovidae</taxon>
        <taxon>Bovinae</taxon>
        <taxon>Bos</taxon>
    </lineage>
</organism>
<proteinExistence type="evidence at transcript level"/>
<reference key="1">
    <citation type="submission" date="2005-11" db="EMBL/GenBank/DDBJ databases">
        <authorList>
            <consortium name="NIH - Mammalian Gene Collection (MGC) project"/>
        </authorList>
    </citation>
    <scope>NUCLEOTIDE SEQUENCE [LARGE SCALE MRNA]</scope>
    <source>
        <strain>Crossbred X Angus</strain>
        <tissue>Liver</tissue>
    </source>
</reference>
<comment type="function">
    <text evidence="2">Regulatory subunit of calcineurin, a calcium-dependent, calmodulin stimulated protein phosphatase. Confers calcium sensitivity.</text>
</comment>
<comment type="subunit">
    <text evidence="2 3">Forms a complex composed of a calmodulin-dependent catalytic subunit (also known as calcineurin A) and a regulatory Ca(2+)-binding subunit (also known as calcineurin B). There are three catalytic subunits, each encoded by a separate gene (PPP3CA, PPP3CB, and PPP3CC) and two regulatory subunits which are also encoded by separate genes (PPP3R1 and PPP3R2) (By similarity). Interacts with SPATA33 (via PQIIIT motif) (By similarity).</text>
</comment>
<comment type="subcellular location">
    <subcellularLocation>
        <location evidence="3">Mitochondrion</location>
    </subcellularLocation>
    <text evidence="3">Localizes in the mitochondria in a SPATA33-dependent manner.</text>
</comment>
<comment type="miscellaneous">
    <text evidence="2">This protein has four functional calcium-binding sites.</text>
</comment>
<comment type="similarity">
    <text evidence="5">Belongs to the calcineurin regulatory subunit family.</text>
</comment>
<evidence type="ECO:0000250" key="1">
    <source>
        <dbReference type="UniProtKB" id="P63098"/>
    </source>
</evidence>
<evidence type="ECO:0000250" key="2">
    <source>
        <dbReference type="UniProtKB" id="P63099"/>
    </source>
</evidence>
<evidence type="ECO:0000250" key="3">
    <source>
        <dbReference type="UniProtKB" id="Q63811"/>
    </source>
</evidence>
<evidence type="ECO:0000255" key="4">
    <source>
        <dbReference type="PROSITE-ProRule" id="PRU00448"/>
    </source>
</evidence>
<evidence type="ECO:0000305" key="5"/>
<feature type="initiator methionine" description="Removed">
    <location>
        <position position="1"/>
    </location>
</feature>
<feature type="chain" id="PRO_0000254660" description="Calcineurin subunit B type 2">
    <location>
        <begin position="2"/>
        <end position="170"/>
    </location>
</feature>
<feature type="domain" description="EF-hand 1" evidence="4">
    <location>
        <begin position="18"/>
        <end position="46"/>
    </location>
</feature>
<feature type="domain" description="EF-hand 2" evidence="4">
    <location>
        <begin position="50"/>
        <end position="85"/>
    </location>
</feature>
<feature type="domain" description="EF-hand 3" evidence="4">
    <location>
        <begin position="87"/>
        <end position="122"/>
    </location>
</feature>
<feature type="domain" description="EF-hand 4" evidence="4">
    <location>
        <begin position="128"/>
        <end position="163"/>
    </location>
</feature>
<feature type="region of interest" description="Calcineurin A binding" evidence="2">
    <location>
        <begin position="131"/>
        <end position="136"/>
    </location>
</feature>
<feature type="binding site" evidence="4">
    <location>
        <position position="63"/>
    </location>
    <ligand>
        <name>Ca(2+)</name>
        <dbReference type="ChEBI" id="CHEBI:29108"/>
        <label>1</label>
    </ligand>
</feature>
<feature type="binding site" evidence="4">
    <location>
        <position position="65"/>
    </location>
    <ligand>
        <name>Ca(2+)</name>
        <dbReference type="ChEBI" id="CHEBI:29108"/>
        <label>1</label>
    </ligand>
</feature>
<feature type="binding site" evidence="4">
    <location>
        <position position="67"/>
    </location>
    <ligand>
        <name>Ca(2+)</name>
        <dbReference type="ChEBI" id="CHEBI:29108"/>
        <label>1</label>
    </ligand>
</feature>
<feature type="binding site" evidence="4">
    <location>
        <position position="69"/>
    </location>
    <ligand>
        <name>Ca(2+)</name>
        <dbReference type="ChEBI" id="CHEBI:29108"/>
        <label>1</label>
    </ligand>
</feature>
<feature type="binding site" evidence="4">
    <location>
        <position position="74"/>
    </location>
    <ligand>
        <name>Ca(2+)</name>
        <dbReference type="ChEBI" id="CHEBI:29108"/>
        <label>1</label>
    </ligand>
</feature>
<feature type="binding site" evidence="4">
    <location>
        <position position="100"/>
    </location>
    <ligand>
        <name>Ca(2+)</name>
        <dbReference type="ChEBI" id="CHEBI:29108"/>
        <label>2</label>
    </ligand>
</feature>
<feature type="binding site" evidence="4">
    <location>
        <position position="102"/>
    </location>
    <ligand>
        <name>Ca(2+)</name>
        <dbReference type="ChEBI" id="CHEBI:29108"/>
        <label>2</label>
    </ligand>
</feature>
<feature type="binding site" evidence="4">
    <location>
        <position position="104"/>
    </location>
    <ligand>
        <name>Ca(2+)</name>
        <dbReference type="ChEBI" id="CHEBI:29108"/>
        <label>2</label>
    </ligand>
</feature>
<feature type="binding site" evidence="4">
    <location>
        <position position="106"/>
    </location>
    <ligand>
        <name>Ca(2+)</name>
        <dbReference type="ChEBI" id="CHEBI:29108"/>
        <label>2</label>
    </ligand>
</feature>
<feature type="binding site" evidence="4">
    <location>
        <position position="111"/>
    </location>
    <ligand>
        <name>Ca(2+)</name>
        <dbReference type="ChEBI" id="CHEBI:29108"/>
        <label>2</label>
    </ligand>
</feature>
<feature type="binding site" evidence="4">
    <location>
        <position position="141"/>
    </location>
    <ligand>
        <name>Ca(2+)</name>
        <dbReference type="ChEBI" id="CHEBI:29108"/>
        <label>3</label>
    </ligand>
</feature>
<feature type="binding site" evidence="4">
    <location>
        <position position="143"/>
    </location>
    <ligand>
        <name>Ca(2+)</name>
        <dbReference type="ChEBI" id="CHEBI:29108"/>
        <label>3</label>
    </ligand>
</feature>
<feature type="binding site" evidence="4">
    <location>
        <position position="145"/>
    </location>
    <ligand>
        <name>Ca(2+)</name>
        <dbReference type="ChEBI" id="CHEBI:29108"/>
        <label>3</label>
    </ligand>
</feature>
<feature type="binding site" evidence="4">
    <location>
        <position position="147"/>
    </location>
    <ligand>
        <name>Ca(2+)</name>
        <dbReference type="ChEBI" id="CHEBI:29108"/>
        <label>3</label>
    </ligand>
</feature>
<feature type="binding site" evidence="4">
    <location>
        <position position="152"/>
    </location>
    <ligand>
        <name>Ca(2+)</name>
        <dbReference type="ChEBI" id="CHEBI:29108"/>
        <label>3</label>
    </ligand>
</feature>
<feature type="site" description="Interaction with PxVP motif in substrates of the catalytic subunit" evidence="1">
    <location>
        <position position="118"/>
    </location>
</feature>
<feature type="site" description="Interaction with PxVP motif in substrates of the catalytic subunit" evidence="1">
    <location>
        <position position="122"/>
    </location>
</feature>
<feature type="lipid moiety-binding region" description="N-myristoyl glycine" evidence="2">
    <location>
        <position position="2"/>
    </location>
</feature>
<keyword id="KW-0106">Calcium</keyword>
<keyword id="KW-0449">Lipoprotein</keyword>
<keyword id="KW-0479">Metal-binding</keyword>
<keyword id="KW-0496">Mitochondrion</keyword>
<keyword id="KW-0519">Myristate</keyword>
<keyword id="KW-1185">Reference proteome</keyword>
<keyword id="KW-0677">Repeat</keyword>